<comment type="function">
    <text evidence="1">May play a role in photosystem I and II biogenesis.</text>
</comment>
<comment type="subcellular location">
    <subcellularLocation>
        <location evidence="1">Plastid</location>
        <location evidence="1">Chloroplast thylakoid membrane</location>
        <topology evidence="1">Single-pass membrane protein</topology>
    </subcellularLocation>
</comment>
<comment type="similarity">
    <text evidence="1">Belongs to the PsbN family.</text>
</comment>
<comment type="caution">
    <text evidence="1">Originally thought to be a component of PSII; based on experiments in Synechocystis, N.tabacum and barley, and its absence from PSII in T.elongatus and T.vulcanus, this is probably not true.</text>
</comment>
<gene>
    <name evidence="1" type="primary">psbN</name>
</gene>
<dbReference type="EMBL" id="AY007471">
    <property type="protein sequence ID" value="AAG12397.1"/>
    <property type="molecule type" value="Genomic_DNA"/>
</dbReference>
<dbReference type="SMR" id="Q7HIV8"/>
<dbReference type="GO" id="GO:0009535">
    <property type="term" value="C:chloroplast thylakoid membrane"/>
    <property type="evidence" value="ECO:0007669"/>
    <property type="project" value="UniProtKB-SubCell"/>
</dbReference>
<dbReference type="GO" id="GO:0015979">
    <property type="term" value="P:photosynthesis"/>
    <property type="evidence" value="ECO:0007669"/>
    <property type="project" value="InterPro"/>
</dbReference>
<dbReference type="HAMAP" id="MF_00293">
    <property type="entry name" value="PSII_PsbN"/>
    <property type="match status" value="1"/>
</dbReference>
<dbReference type="InterPro" id="IPR003398">
    <property type="entry name" value="PSII_PsbN"/>
</dbReference>
<dbReference type="PANTHER" id="PTHR35326">
    <property type="entry name" value="PROTEIN PSBN"/>
    <property type="match status" value="1"/>
</dbReference>
<dbReference type="PANTHER" id="PTHR35326:SF3">
    <property type="entry name" value="PROTEIN PSBN"/>
    <property type="match status" value="1"/>
</dbReference>
<dbReference type="Pfam" id="PF02468">
    <property type="entry name" value="PsbN"/>
    <property type="match status" value="1"/>
</dbReference>
<protein>
    <recommendedName>
        <fullName evidence="1">Protein PsbN</fullName>
    </recommendedName>
</protein>
<sequence>METATLVAISISGLLVSFTGYALYTAFGQPSQQLRDPFEEHGD</sequence>
<evidence type="ECO:0000255" key="1">
    <source>
        <dbReference type="HAMAP-Rule" id="MF_00293"/>
    </source>
</evidence>
<keyword id="KW-0150">Chloroplast</keyword>
<keyword id="KW-0472">Membrane</keyword>
<keyword id="KW-0934">Plastid</keyword>
<keyword id="KW-0793">Thylakoid</keyword>
<keyword id="KW-0812">Transmembrane</keyword>
<keyword id="KW-1133">Transmembrane helix</keyword>
<proteinExistence type="inferred from homology"/>
<organism>
    <name type="scientific">Spathiphyllum wallisii</name>
    <name type="common">Peace lily</name>
    <dbReference type="NCBI Taxonomy" id="85269"/>
    <lineage>
        <taxon>Eukaryota</taxon>
        <taxon>Viridiplantae</taxon>
        <taxon>Streptophyta</taxon>
        <taxon>Embryophyta</taxon>
        <taxon>Tracheophyta</taxon>
        <taxon>Spermatophyta</taxon>
        <taxon>Magnoliopsida</taxon>
        <taxon>Liliopsida</taxon>
        <taxon>Araceae</taxon>
        <taxon>Pothoideae</taxon>
        <taxon>Monstereae</taxon>
        <taxon>Spathiphyllum</taxon>
    </lineage>
</organism>
<reference key="1">
    <citation type="submission" date="2000-02" db="EMBL/GenBank/DDBJ databases">
        <title>Long branches in the seed plants and the root of the angiosperms.</title>
        <authorList>
            <person name="Graham S.W."/>
            <person name="Reeves P.A."/>
            <person name="Burns A."/>
            <person name="Olmstead R.G."/>
        </authorList>
    </citation>
    <scope>NUCLEOTIDE SEQUENCE [GENOMIC DNA]</scope>
</reference>
<feature type="chain" id="PRO_0000207956" description="Protein PsbN">
    <location>
        <begin position="1"/>
        <end position="43"/>
    </location>
</feature>
<feature type="transmembrane region" description="Helical" evidence="1">
    <location>
        <begin position="5"/>
        <end position="27"/>
    </location>
</feature>
<accession>Q7HIV8</accession>
<geneLocation type="chloroplast"/>
<name>PSBN_SPAWA</name>